<proteinExistence type="inferred from homology"/>
<keyword id="KW-0488">Methylation</keyword>
<keyword id="KW-1185">Reference proteome</keyword>
<keyword id="KW-0687">Ribonucleoprotein</keyword>
<keyword id="KW-0689">Ribosomal protein</keyword>
<keyword id="KW-0694">RNA-binding</keyword>
<keyword id="KW-0699">rRNA-binding</keyword>
<evidence type="ECO:0000255" key="1">
    <source>
        <dbReference type="HAMAP-Rule" id="MF_00736"/>
    </source>
</evidence>
<evidence type="ECO:0000305" key="2"/>
<organism>
    <name type="scientific">Sulfurimonas denitrificans (strain ATCC 33889 / DSM 1251)</name>
    <name type="common">Thiomicrospira denitrificans (strain ATCC 33889 / DSM 1251)</name>
    <dbReference type="NCBI Taxonomy" id="326298"/>
    <lineage>
        <taxon>Bacteria</taxon>
        <taxon>Pseudomonadati</taxon>
        <taxon>Campylobacterota</taxon>
        <taxon>Epsilonproteobacteria</taxon>
        <taxon>Campylobacterales</taxon>
        <taxon>Sulfurimonadaceae</taxon>
        <taxon>Sulfurimonas</taxon>
    </lineage>
</organism>
<dbReference type="EMBL" id="CP000153">
    <property type="protein sequence ID" value="ABB43630.1"/>
    <property type="molecule type" value="Genomic_DNA"/>
</dbReference>
<dbReference type="RefSeq" id="WP_011371984.1">
    <property type="nucleotide sequence ID" value="NC_007575.1"/>
</dbReference>
<dbReference type="SMR" id="Q30TQ1"/>
<dbReference type="STRING" id="326298.Suden_0349"/>
<dbReference type="KEGG" id="tdn:Suden_0349"/>
<dbReference type="eggNOG" id="COG0080">
    <property type="taxonomic scope" value="Bacteria"/>
</dbReference>
<dbReference type="HOGENOM" id="CLU_074237_2_0_7"/>
<dbReference type="OrthoDB" id="9802408at2"/>
<dbReference type="Proteomes" id="UP000002714">
    <property type="component" value="Chromosome"/>
</dbReference>
<dbReference type="GO" id="GO:0022625">
    <property type="term" value="C:cytosolic large ribosomal subunit"/>
    <property type="evidence" value="ECO:0007669"/>
    <property type="project" value="TreeGrafter"/>
</dbReference>
<dbReference type="GO" id="GO:0070180">
    <property type="term" value="F:large ribosomal subunit rRNA binding"/>
    <property type="evidence" value="ECO:0007669"/>
    <property type="project" value="UniProtKB-UniRule"/>
</dbReference>
<dbReference type="GO" id="GO:0003735">
    <property type="term" value="F:structural constituent of ribosome"/>
    <property type="evidence" value="ECO:0007669"/>
    <property type="project" value="InterPro"/>
</dbReference>
<dbReference type="GO" id="GO:0006412">
    <property type="term" value="P:translation"/>
    <property type="evidence" value="ECO:0007669"/>
    <property type="project" value="UniProtKB-UniRule"/>
</dbReference>
<dbReference type="CDD" id="cd00349">
    <property type="entry name" value="Ribosomal_L11"/>
    <property type="match status" value="1"/>
</dbReference>
<dbReference type="FunFam" id="3.30.1550.10:FF:000001">
    <property type="entry name" value="50S ribosomal protein L11"/>
    <property type="match status" value="1"/>
</dbReference>
<dbReference type="Gene3D" id="1.10.10.250">
    <property type="entry name" value="Ribosomal protein L11, C-terminal domain"/>
    <property type="match status" value="1"/>
</dbReference>
<dbReference type="Gene3D" id="3.30.1550.10">
    <property type="entry name" value="Ribosomal protein L11/L12, N-terminal domain"/>
    <property type="match status" value="1"/>
</dbReference>
<dbReference type="HAMAP" id="MF_00736">
    <property type="entry name" value="Ribosomal_uL11"/>
    <property type="match status" value="1"/>
</dbReference>
<dbReference type="InterPro" id="IPR000911">
    <property type="entry name" value="Ribosomal_uL11"/>
</dbReference>
<dbReference type="InterPro" id="IPR006519">
    <property type="entry name" value="Ribosomal_uL11_bac-typ"/>
</dbReference>
<dbReference type="InterPro" id="IPR020783">
    <property type="entry name" value="Ribosomal_uL11_C"/>
</dbReference>
<dbReference type="InterPro" id="IPR036769">
    <property type="entry name" value="Ribosomal_uL11_C_sf"/>
</dbReference>
<dbReference type="InterPro" id="IPR020785">
    <property type="entry name" value="Ribosomal_uL11_CS"/>
</dbReference>
<dbReference type="InterPro" id="IPR020784">
    <property type="entry name" value="Ribosomal_uL11_N"/>
</dbReference>
<dbReference type="InterPro" id="IPR036796">
    <property type="entry name" value="Ribosomal_uL11_N_sf"/>
</dbReference>
<dbReference type="NCBIfam" id="TIGR01632">
    <property type="entry name" value="L11_bact"/>
    <property type="match status" value="1"/>
</dbReference>
<dbReference type="PANTHER" id="PTHR11661">
    <property type="entry name" value="60S RIBOSOMAL PROTEIN L12"/>
    <property type="match status" value="1"/>
</dbReference>
<dbReference type="PANTHER" id="PTHR11661:SF1">
    <property type="entry name" value="LARGE RIBOSOMAL SUBUNIT PROTEIN UL11M"/>
    <property type="match status" value="1"/>
</dbReference>
<dbReference type="Pfam" id="PF00298">
    <property type="entry name" value="Ribosomal_L11"/>
    <property type="match status" value="1"/>
</dbReference>
<dbReference type="Pfam" id="PF03946">
    <property type="entry name" value="Ribosomal_L11_N"/>
    <property type="match status" value="1"/>
</dbReference>
<dbReference type="SMART" id="SM00649">
    <property type="entry name" value="RL11"/>
    <property type="match status" value="1"/>
</dbReference>
<dbReference type="SUPFAM" id="SSF54747">
    <property type="entry name" value="Ribosomal L11/L12e N-terminal domain"/>
    <property type="match status" value="1"/>
</dbReference>
<dbReference type="SUPFAM" id="SSF46906">
    <property type="entry name" value="Ribosomal protein L11, C-terminal domain"/>
    <property type="match status" value="1"/>
</dbReference>
<dbReference type="PROSITE" id="PS00359">
    <property type="entry name" value="RIBOSOMAL_L11"/>
    <property type="match status" value="1"/>
</dbReference>
<feature type="chain" id="PRO_0000258237" description="Large ribosomal subunit protein uL11">
    <location>
        <begin position="1"/>
        <end position="141"/>
    </location>
</feature>
<reference key="1">
    <citation type="journal article" date="2008" name="Appl. Environ. Microbiol.">
        <title>Genome of the epsilonproteobacterial chemolithoautotroph Sulfurimonas denitrificans.</title>
        <authorList>
            <person name="Sievert S.M."/>
            <person name="Scott K.M."/>
            <person name="Klotz M.G."/>
            <person name="Chain P.S.G."/>
            <person name="Hauser L.J."/>
            <person name="Hemp J."/>
            <person name="Huegler M."/>
            <person name="Land M."/>
            <person name="Lapidus A."/>
            <person name="Larimer F.W."/>
            <person name="Lucas S."/>
            <person name="Malfatti S.A."/>
            <person name="Meyer F."/>
            <person name="Paulsen I.T."/>
            <person name="Ren Q."/>
            <person name="Simon J."/>
            <person name="Bailey K."/>
            <person name="Diaz E."/>
            <person name="Fitzpatrick K.A."/>
            <person name="Glover B."/>
            <person name="Gwatney N."/>
            <person name="Korajkic A."/>
            <person name="Long A."/>
            <person name="Mobberley J.M."/>
            <person name="Pantry S.N."/>
            <person name="Pazder G."/>
            <person name="Peterson S."/>
            <person name="Quintanilla J.D."/>
            <person name="Sprinkle R."/>
            <person name="Stephens J."/>
            <person name="Thomas P."/>
            <person name="Vaughn R."/>
            <person name="Weber M.J."/>
            <person name="Wooten L.L."/>
        </authorList>
    </citation>
    <scope>NUCLEOTIDE SEQUENCE [LARGE SCALE GENOMIC DNA]</scope>
    <source>
        <strain>ATCC 33889 / DSM 1251</strain>
    </source>
</reference>
<sequence length="141" mass="15083">MAKKIMGYIKLQIEAGKATPAPPVGPALGQRGVNIMEFTKAFNEKTKDKMGFKVPVVITVFTDKSFTFVVKQPPASALLMHAAGLKGGSSNPLKNKVAKLTQAQLMEIVNRKIEDLNTDDKEAAAKTIAGSARSIGIEIVD</sequence>
<accession>Q30TQ1</accession>
<name>RL11_SULDN</name>
<gene>
    <name evidence="1" type="primary">rplK</name>
    <name type="ordered locus">Suden_0349</name>
</gene>
<protein>
    <recommendedName>
        <fullName evidence="1">Large ribosomal subunit protein uL11</fullName>
    </recommendedName>
    <alternativeName>
        <fullName evidence="2">50S ribosomal protein L11</fullName>
    </alternativeName>
</protein>
<comment type="function">
    <text evidence="1">Forms part of the ribosomal stalk which helps the ribosome interact with GTP-bound translation factors.</text>
</comment>
<comment type="subunit">
    <text evidence="1">Part of the ribosomal stalk of the 50S ribosomal subunit. Interacts with L10 and the large rRNA to form the base of the stalk. L10 forms an elongated spine to which L12 dimers bind in a sequential fashion forming a multimeric L10(L12)X complex.</text>
</comment>
<comment type="PTM">
    <text evidence="1">One or more lysine residues are methylated.</text>
</comment>
<comment type="similarity">
    <text evidence="1">Belongs to the universal ribosomal protein uL11 family.</text>
</comment>